<organism>
    <name type="scientific">Brevibacillus brevis (strain 47 / JCM 6285 / NBRC 100599)</name>
    <dbReference type="NCBI Taxonomy" id="358681"/>
    <lineage>
        <taxon>Bacteria</taxon>
        <taxon>Bacillati</taxon>
        <taxon>Bacillota</taxon>
        <taxon>Bacilli</taxon>
        <taxon>Bacillales</taxon>
        <taxon>Paenibacillaceae</taxon>
        <taxon>Brevibacillus</taxon>
    </lineage>
</organism>
<evidence type="ECO:0000255" key="1">
    <source>
        <dbReference type="HAMAP-Rule" id="MF_01575"/>
    </source>
</evidence>
<proteinExistence type="inferred from homology"/>
<name>Y2983_BREBN</name>
<keyword id="KW-1185">Reference proteome</keyword>
<gene>
    <name type="ordered locus">BBR47_29830</name>
</gene>
<feature type="chain" id="PRO_0000382544" description="UPF0398 protein BBR47_29830">
    <location>
        <begin position="1"/>
        <end position="188"/>
    </location>
</feature>
<dbReference type="EMBL" id="AP008955">
    <property type="protein sequence ID" value="BAH43960.1"/>
    <property type="molecule type" value="Genomic_DNA"/>
</dbReference>
<dbReference type="RefSeq" id="WP_015891278.1">
    <property type="nucleotide sequence ID" value="NC_012491.1"/>
</dbReference>
<dbReference type="SMR" id="C0ZDV1"/>
<dbReference type="STRING" id="358681.BBR47_29830"/>
<dbReference type="KEGG" id="bbe:BBR47_29830"/>
<dbReference type="eggNOG" id="COG4474">
    <property type="taxonomic scope" value="Bacteria"/>
</dbReference>
<dbReference type="HOGENOM" id="CLU_105319_0_0_9"/>
<dbReference type="Proteomes" id="UP000001877">
    <property type="component" value="Chromosome"/>
</dbReference>
<dbReference type="Gene3D" id="3.40.50.450">
    <property type="match status" value="1"/>
</dbReference>
<dbReference type="HAMAP" id="MF_01575">
    <property type="entry name" value="UPF0398"/>
    <property type="match status" value="1"/>
</dbReference>
<dbReference type="InterPro" id="IPR010697">
    <property type="entry name" value="YspA"/>
</dbReference>
<dbReference type="NCBIfam" id="NF010181">
    <property type="entry name" value="PRK13660.1"/>
    <property type="match status" value="1"/>
</dbReference>
<dbReference type="PANTHER" id="PTHR38440:SF1">
    <property type="entry name" value="UPF0398 PROTEIN SPR0331"/>
    <property type="match status" value="1"/>
</dbReference>
<dbReference type="PANTHER" id="PTHR38440">
    <property type="entry name" value="UPF0398 PROTEIN YPSA"/>
    <property type="match status" value="1"/>
</dbReference>
<dbReference type="Pfam" id="PF06908">
    <property type="entry name" value="YpsA"/>
    <property type="match status" value="1"/>
</dbReference>
<dbReference type="PIRSF" id="PIRSF021290">
    <property type="entry name" value="DUF1273"/>
    <property type="match status" value="1"/>
</dbReference>
<dbReference type="SUPFAM" id="SSF102405">
    <property type="entry name" value="MCP/YpsA-like"/>
    <property type="match status" value="1"/>
</dbReference>
<accession>C0ZDV1</accession>
<sequence length="188" mass="21923">MLKRLFVSGYKAHELGIFNEKNPGLAIIKKALKRELVRFLEEELEWVIISGQLGVEMWAAETVLELKKEYPHLKLAVITPFLNQEEKWKEETQDYYRNIVTQADYINSVYQTPYQGAWQLGEKDKFLLSNSDGILLVYDEENEGSPKFLSKLAAKKADNSDYQLFRINAYDLQAIAEEQQQELYNDSF</sequence>
<reference key="1">
    <citation type="submission" date="2005-03" db="EMBL/GenBank/DDBJ databases">
        <title>Brevibacillus brevis strain 47, complete genome.</title>
        <authorList>
            <person name="Hosoyama A."/>
            <person name="Yamada R."/>
            <person name="Hongo Y."/>
            <person name="Terui Y."/>
            <person name="Ankai A."/>
            <person name="Masuyama W."/>
            <person name="Sekiguchi M."/>
            <person name="Takeda T."/>
            <person name="Asano K."/>
            <person name="Ohji S."/>
            <person name="Ichikawa N."/>
            <person name="Narita S."/>
            <person name="Aoki N."/>
            <person name="Miura H."/>
            <person name="Matsushita S."/>
            <person name="Sekigawa T."/>
            <person name="Yamagata H."/>
            <person name="Yoshikawa H."/>
            <person name="Udaka S."/>
            <person name="Tanikawa S."/>
            <person name="Fujita N."/>
        </authorList>
    </citation>
    <scope>NUCLEOTIDE SEQUENCE [LARGE SCALE GENOMIC DNA]</scope>
    <source>
        <strain>47 / JCM 6285 / NBRC 100599</strain>
    </source>
</reference>
<protein>
    <recommendedName>
        <fullName evidence="1">UPF0398 protein BBR47_29830</fullName>
    </recommendedName>
</protein>
<comment type="similarity">
    <text evidence="1">Belongs to the UPF0398 family.</text>
</comment>